<feature type="chain" id="PRO_1000048359" description="Glutaminase">
    <location>
        <begin position="1"/>
        <end position="304"/>
    </location>
</feature>
<feature type="binding site" evidence="1">
    <location>
        <position position="63"/>
    </location>
    <ligand>
        <name>substrate</name>
    </ligand>
</feature>
<feature type="binding site" evidence="1">
    <location>
        <position position="114"/>
    </location>
    <ligand>
        <name>substrate</name>
    </ligand>
</feature>
<feature type="binding site" evidence="1">
    <location>
        <position position="158"/>
    </location>
    <ligand>
        <name>substrate</name>
    </ligand>
</feature>
<feature type="binding site" evidence="1">
    <location>
        <position position="165"/>
    </location>
    <ligand>
        <name>substrate</name>
    </ligand>
</feature>
<feature type="binding site" evidence="1">
    <location>
        <position position="189"/>
    </location>
    <ligand>
        <name>substrate</name>
    </ligand>
</feature>
<feature type="binding site" evidence="1">
    <location>
        <position position="240"/>
    </location>
    <ligand>
        <name>substrate</name>
    </ligand>
</feature>
<feature type="binding site" evidence="1">
    <location>
        <position position="258"/>
    </location>
    <ligand>
        <name>substrate</name>
    </ligand>
</feature>
<keyword id="KW-0378">Hydrolase</keyword>
<evidence type="ECO:0000255" key="1">
    <source>
        <dbReference type="HAMAP-Rule" id="MF_00313"/>
    </source>
</evidence>
<proteinExistence type="inferred from homology"/>
<sequence>MPELALLEEVVEKVRPLLGQGKVANYIPALASVDAGKLGIAVTTVDGETLGAGDYLEPFSIQSISKVFSLTLALTLYEEAEIWSRVGKEPSGHSFNSLVQVELERGKPRNPFINAGALVIADLLQSRLGAPKHRMLELVRQLSQNDKVCFDKQVADSEYQHSARNAAIAYLMKSFGNFQGDVDTVLRTYFHYCALKMNCADLSRAMLYLANRGKTVDGTELISQVQTRQLNALLATSGLYDGAGEFAYRVGMPGKSGVGGGIIAVIPGELSICVWSPELDENGNSLAGTAMLEHLSQRLGRSIF</sequence>
<accession>A4Y8Y3</accession>
<name>GLSA_SHEPC</name>
<reference key="1">
    <citation type="submission" date="2007-04" db="EMBL/GenBank/DDBJ databases">
        <title>Complete sequence of Shewanella putrefaciens CN-32.</title>
        <authorList>
            <consortium name="US DOE Joint Genome Institute"/>
            <person name="Copeland A."/>
            <person name="Lucas S."/>
            <person name="Lapidus A."/>
            <person name="Barry K."/>
            <person name="Detter J.C."/>
            <person name="Glavina del Rio T."/>
            <person name="Hammon N."/>
            <person name="Israni S."/>
            <person name="Dalin E."/>
            <person name="Tice H."/>
            <person name="Pitluck S."/>
            <person name="Chain P."/>
            <person name="Malfatti S."/>
            <person name="Shin M."/>
            <person name="Vergez L."/>
            <person name="Schmutz J."/>
            <person name="Larimer F."/>
            <person name="Land M."/>
            <person name="Hauser L."/>
            <person name="Kyrpides N."/>
            <person name="Mikhailova N."/>
            <person name="Romine M.F."/>
            <person name="Fredrickson J."/>
            <person name="Tiedje J."/>
            <person name="Richardson P."/>
        </authorList>
    </citation>
    <scope>NUCLEOTIDE SEQUENCE [LARGE SCALE GENOMIC DNA]</scope>
    <source>
        <strain>CN-32 / ATCC BAA-453</strain>
    </source>
</reference>
<protein>
    <recommendedName>
        <fullName evidence="1">Glutaminase</fullName>
        <ecNumber evidence="1">3.5.1.2</ecNumber>
    </recommendedName>
</protein>
<organism>
    <name type="scientific">Shewanella putrefaciens (strain CN-32 / ATCC BAA-453)</name>
    <dbReference type="NCBI Taxonomy" id="319224"/>
    <lineage>
        <taxon>Bacteria</taxon>
        <taxon>Pseudomonadati</taxon>
        <taxon>Pseudomonadota</taxon>
        <taxon>Gammaproteobacteria</taxon>
        <taxon>Alteromonadales</taxon>
        <taxon>Shewanellaceae</taxon>
        <taxon>Shewanella</taxon>
    </lineage>
</organism>
<gene>
    <name evidence="1" type="primary">glsA</name>
    <name type="ordered locus">Sputcn32_2697</name>
</gene>
<dbReference type="EC" id="3.5.1.2" evidence="1"/>
<dbReference type="EMBL" id="CP000681">
    <property type="protein sequence ID" value="ABP76416.1"/>
    <property type="molecule type" value="Genomic_DNA"/>
</dbReference>
<dbReference type="SMR" id="A4Y8Y3"/>
<dbReference type="STRING" id="319224.Sputcn32_2697"/>
<dbReference type="KEGG" id="spc:Sputcn32_2697"/>
<dbReference type="eggNOG" id="COG2066">
    <property type="taxonomic scope" value="Bacteria"/>
</dbReference>
<dbReference type="HOGENOM" id="CLU_027932_1_1_6"/>
<dbReference type="GO" id="GO:0004359">
    <property type="term" value="F:glutaminase activity"/>
    <property type="evidence" value="ECO:0007669"/>
    <property type="project" value="UniProtKB-UniRule"/>
</dbReference>
<dbReference type="GO" id="GO:0006537">
    <property type="term" value="P:glutamate biosynthetic process"/>
    <property type="evidence" value="ECO:0007669"/>
    <property type="project" value="TreeGrafter"/>
</dbReference>
<dbReference type="GO" id="GO:0006543">
    <property type="term" value="P:glutamine catabolic process"/>
    <property type="evidence" value="ECO:0007669"/>
    <property type="project" value="TreeGrafter"/>
</dbReference>
<dbReference type="FunFam" id="3.40.710.10:FF:000005">
    <property type="entry name" value="Glutaminase"/>
    <property type="match status" value="1"/>
</dbReference>
<dbReference type="Gene3D" id="3.40.710.10">
    <property type="entry name" value="DD-peptidase/beta-lactamase superfamily"/>
    <property type="match status" value="1"/>
</dbReference>
<dbReference type="HAMAP" id="MF_00313">
    <property type="entry name" value="Glutaminase"/>
    <property type="match status" value="1"/>
</dbReference>
<dbReference type="InterPro" id="IPR012338">
    <property type="entry name" value="Beta-lactam/transpept-like"/>
</dbReference>
<dbReference type="InterPro" id="IPR015868">
    <property type="entry name" value="Glutaminase"/>
</dbReference>
<dbReference type="NCBIfam" id="TIGR03814">
    <property type="entry name" value="Gln_ase"/>
    <property type="match status" value="1"/>
</dbReference>
<dbReference type="NCBIfam" id="NF002132">
    <property type="entry name" value="PRK00971.1-1"/>
    <property type="match status" value="1"/>
</dbReference>
<dbReference type="NCBIfam" id="NF002133">
    <property type="entry name" value="PRK00971.1-2"/>
    <property type="match status" value="1"/>
</dbReference>
<dbReference type="PANTHER" id="PTHR12544">
    <property type="entry name" value="GLUTAMINASE"/>
    <property type="match status" value="1"/>
</dbReference>
<dbReference type="PANTHER" id="PTHR12544:SF29">
    <property type="entry name" value="GLUTAMINASE"/>
    <property type="match status" value="1"/>
</dbReference>
<dbReference type="Pfam" id="PF04960">
    <property type="entry name" value="Glutaminase"/>
    <property type="match status" value="1"/>
</dbReference>
<dbReference type="SUPFAM" id="SSF56601">
    <property type="entry name" value="beta-lactamase/transpeptidase-like"/>
    <property type="match status" value="1"/>
</dbReference>
<comment type="catalytic activity">
    <reaction evidence="1">
        <text>L-glutamine + H2O = L-glutamate + NH4(+)</text>
        <dbReference type="Rhea" id="RHEA:15889"/>
        <dbReference type="ChEBI" id="CHEBI:15377"/>
        <dbReference type="ChEBI" id="CHEBI:28938"/>
        <dbReference type="ChEBI" id="CHEBI:29985"/>
        <dbReference type="ChEBI" id="CHEBI:58359"/>
        <dbReference type="EC" id="3.5.1.2"/>
    </reaction>
</comment>
<comment type="subunit">
    <text evidence="1">Homotetramer.</text>
</comment>
<comment type="similarity">
    <text evidence="1">Belongs to the glutaminase family.</text>
</comment>